<keyword id="KW-0028">Amino-acid biosynthesis</keyword>
<keyword id="KW-0032">Aminotransferase</keyword>
<keyword id="KW-0963">Cytoplasm</keyword>
<keyword id="KW-0641">Proline biosynthesis</keyword>
<keyword id="KW-0663">Pyridoxal phosphate</keyword>
<keyword id="KW-0808">Transferase</keyword>
<proteinExistence type="inferred from homology"/>
<name>OAT2_STAAM</name>
<organism>
    <name type="scientific">Staphylococcus aureus (strain Mu50 / ATCC 700699)</name>
    <dbReference type="NCBI Taxonomy" id="158878"/>
    <lineage>
        <taxon>Bacteria</taxon>
        <taxon>Bacillati</taxon>
        <taxon>Bacillota</taxon>
        <taxon>Bacilli</taxon>
        <taxon>Bacillales</taxon>
        <taxon>Staphylococcaceae</taxon>
        <taxon>Staphylococcus</taxon>
    </lineage>
</organism>
<dbReference type="EC" id="2.6.1.13" evidence="1"/>
<dbReference type="EMBL" id="BA000017">
    <property type="protein sequence ID" value="BAB57119.1"/>
    <property type="molecule type" value="Genomic_DNA"/>
</dbReference>
<dbReference type="RefSeq" id="WP_000167314.1">
    <property type="nucleotide sequence ID" value="NC_002758.2"/>
</dbReference>
<dbReference type="SMR" id="P60297"/>
<dbReference type="KEGG" id="sav:SAV0957"/>
<dbReference type="HOGENOM" id="CLU_016922_10_1_9"/>
<dbReference type="PhylomeDB" id="P60297"/>
<dbReference type="UniPathway" id="UPA00098">
    <property type="reaction ID" value="UER00358"/>
</dbReference>
<dbReference type="Proteomes" id="UP000002481">
    <property type="component" value="Chromosome"/>
</dbReference>
<dbReference type="GO" id="GO:0005737">
    <property type="term" value="C:cytoplasm"/>
    <property type="evidence" value="ECO:0007669"/>
    <property type="project" value="UniProtKB-SubCell"/>
</dbReference>
<dbReference type="GO" id="GO:0042802">
    <property type="term" value="F:identical protein binding"/>
    <property type="evidence" value="ECO:0007669"/>
    <property type="project" value="TreeGrafter"/>
</dbReference>
<dbReference type="GO" id="GO:0004587">
    <property type="term" value="F:ornithine aminotransferase activity"/>
    <property type="evidence" value="ECO:0007669"/>
    <property type="project" value="UniProtKB-UniRule"/>
</dbReference>
<dbReference type="GO" id="GO:0030170">
    <property type="term" value="F:pyridoxal phosphate binding"/>
    <property type="evidence" value="ECO:0007669"/>
    <property type="project" value="UniProtKB-UniRule"/>
</dbReference>
<dbReference type="GO" id="GO:0055129">
    <property type="term" value="P:L-proline biosynthetic process"/>
    <property type="evidence" value="ECO:0007669"/>
    <property type="project" value="UniProtKB-UniRule"/>
</dbReference>
<dbReference type="CDD" id="cd00610">
    <property type="entry name" value="OAT_like"/>
    <property type="match status" value="1"/>
</dbReference>
<dbReference type="FunFam" id="3.40.640.10:FF:000011">
    <property type="entry name" value="Ornithine aminotransferase"/>
    <property type="match status" value="1"/>
</dbReference>
<dbReference type="Gene3D" id="3.90.1150.10">
    <property type="entry name" value="Aspartate Aminotransferase, domain 1"/>
    <property type="match status" value="1"/>
</dbReference>
<dbReference type="Gene3D" id="3.40.640.10">
    <property type="entry name" value="Type I PLP-dependent aspartate aminotransferase-like (Major domain)"/>
    <property type="match status" value="1"/>
</dbReference>
<dbReference type="HAMAP" id="MF_01689">
    <property type="entry name" value="Ornith_aminotrans_3"/>
    <property type="match status" value="1"/>
</dbReference>
<dbReference type="InterPro" id="IPR005814">
    <property type="entry name" value="Aminotrans_3"/>
</dbReference>
<dbReference type="InterPro" id="IPR049704">
    <property type="entry name" value="Aminotrans_3_PPA_site"/>
</dbReference>
<dbReference type="InterPro" id="IPR050103">
    <property type="entry name" value="Class-III_PLP-dep_AT"/>
</dbReference>
<dbReference type="InterPro" id="IPR010164">
    <property type="entry name" value="Orn_aminotrans"/>
</dbReference>
<dbReference type="InterPro" id="IPR034757">
    <property type="entry name" value="Ornith_aminotrans_bact"/>
</dbReference>
<dbReference type="InterPro" id="IPR015424">
    <property type="entry name" value="PyrdxlP-dep_Trfase"/>
</dbReference>
<dbReference type="InterPro" id="IPR015421">
    <property type="entry name" value="PyrdxlP-dep_Trfase_major"/>
</dbReference>
<dbReference type="InterPro" id="IPR015422">
    <property type="entry name" value="PyrdxlP-dep_Trfase_small"/>
</dbReference>
<dbReference type="NCBIfam" id="TIGR01885">
    <property type="entry name" value="Orn_aminotrans"/>
    <property type="match status" value="1"/>
</dbReference>
<dbReference type="NCBIfam" id="NF002325">
    <property type="entry name" value="PRK01278.1"/>
    <property type="match status" value="1"/>
</dbReference>
<dbReference type="NCBIfam" id="NF003145">
    <property type="entry name" value="PRK04073.1"/>
    <property type="match status" value="1"/>
</dbReference>
<dbReference type="PANTHER" id="PTHR11986">
    <property type="entry name" value="AMINOTRANSFERASE CLASS III"/>
    <property type="match status" value="1"/>
</dbReference>
<dbReference type="PANTHER" id="PTHR11986:SF18">
    <property type="entry name" value="ORNITHINE AMINOTRANSFERASE, MITOCHONDRIAL"/>
    <property type="match status" value="1"/>
</dbReference>
<dbReference type="Pfam" id="PF00202">
    <property type="entry name" value="Aminotran_3"/>
    <property type="match status" value="1"/>
</dbReference>
<dbReference type="PIRSF" id="PIRSF000521">
    <property type="entry name" value="Transaminase_4ab_Lys_Orn"/>
    <property type="match status" value="1"/>
</dbReference>
<dbReference type="SUPFAM" id="SSF53383">
    <property type="entry name" value="PLP-dependent transferases"/>
    <property type="match status" value="1"/>
</dbReference>
<dbReference type="PROSITE" id="PS00600">
    <property type="entry name" value="AA_TRANSFER_CLASS_3"/>
    <property type="match status" value="1"/>
</dbReference>
<gene>
    <name evidence="1" type="primary">rocD2</name>
    <name type="ordered locus">SAV0957</name>
</gene>
<evidence type="ECO:0000255" key="1">
    <source>
        <dbReference type="HAMAP-Rule" id="MF_01689"/>
    </source>
</evidence>
<protein>
    <recommendedName>
        <fullName evidence="1">Ornithine aminotransferase 2</fullName>
        <shortName evidence="1">OAT 2</shortName>
        <ecNumber evidence="1">2.6.1.13</ecNumber>
    </recommendedName>
    <alternativeName>
        <fullName evidence="1">Ornithine--oxo-acid aminotransferase 2</fullName>
    </alternativeName>
</protein>
<sequence length="396" mass="43418">MTKSEKIIELTNHYGAHNYLPLPIVISEAEGVWVKDPEGNKYMDMLSAYSAVNQGHRHPKIIQALKDQADKVTLVSRAFHSDNLGEWYEKICKLAGKDKALPMNTGAEAVETALKAARRWAYDVKGIEPNKAEIIAFNGNFHGRTMAPVSLSSEAEYQRGYGPLLDGFRKVDFGDVDALKAAINENTAAVLVEPIQGEAGINIPPEGYLKAIRELCDEHNVLFIADEIQAGLGRSGKLFATDWDNVKPDVYILGKALGGGVFPISVVLADKEVLDVFTPGSHGSTFGGNPLACAASIAALDVIVDEDLPGRSLELGDYFKEQLKQIDHPSIKEVRGRGLFIGVELNESARPYCEALKEEGLLCKETHDTVIRFAPPLIITKEELDLALEKIRHVFQ</sequence>
<reference key="1">
    <citation type="journal article" date="2001" name="Lancet">
        <title>Whole genome sequencing of meticillin-resistant Staphylococcus aureus.</title>
        <authorList>
            <person name="Kuroda M."/>
            <person name="Ohta T."/>
            <person name="Uchiyama I."/>
            <person name="Baba T."/>
            <person name="Yuzawa H."/>
            <person name="Kobayashi I."/>
            <person name="Cui L."/>
            <person name="Oguchi A."/>
            <person name="Aoki K."/>
            <person name="Nagai Y."/>
            <person name="Lian J.-Q."/>
            <person name="Ito T."/>
            <person name="Kanamori M."/>
            <person name="Matsumaru H."/>
            <person name="Maruyama A."/>
            <person name="Murakami H."/>
            <person name="Hosoyama A."/>
            <person name="Mizutani-Ui Y."/>
            <person name="Takahashi N.K."/>
            <person name="Sawano T."/>
            <person name="Inoue R."/>
            <person name="Kaito C."/>
            <person name="Sekimizu K."/>
            <person name="Hirakawa H."/>
            <person name="Kuhara S."/>
            <person name="Goto S."/>
            <person name="Yabuzaki J."/>
            <person name="Kanehisa M."/>
            <person name="Yamashita A."/>
            <person name="Oshima K."/>
            <person name="Furuya K."/>
            <person name="Yoshino C."/>
            <person name="Shiba T."/>
            <person name="Hattori M."/>
            <person name="Ogasawara N."/>
            <person name="Hayashi H."/>
            <person name="Hiramatsu K."/>
        </authorList>
    </citation>
    <scope>NUCLEOTIDE SEQUENCE [LARGE SCALE GENOMIC DNA]</scope>
    <source>
        <strain>Mu50 / ATCC 700699</strain>
    </source>
</reference>
<accession>P60297</accession>
<accession>Q99VD1</accession>
<feature type="chain" id="PRO_0000112783" description="Ornithine aminotransferase 2">
    <location>
        <begin position="1"/>
        <end position="396"/>
    </location>
</feature>
<feature type="modified residue" description="N6-(pyridoxal phosphate)lysine" evidence="1">
    <location>
        <position position="255"/>
    </location>
</feature>
<comment type="function">
    <text evidence="1">Catalyzes the interconversion of ornithine to glutamate semialdehyde.</text>
</comment>
<comment type="catalytic activity">
    <reaction evidence="1">
        <text>a 2-oxocarboxylate + L-ornithine = L-glutamate 5-semialdehyde + an L-alpha-amino acid</text>
        <dbReference type="Rhea" id="RHEA:13877"/>
        <dbReference type="ChEBI" id="CHEBI:35179"/>
        <dbReference type="ChEBI" id="CHEBI:46911"/>
        <dbReference type="ChEBI" id="CHEBI:58066"/>
        <dbReference type="ChEBI" id="CHEBI:59869"/>
        <dbReference type="EC" id="2.6.1.13"/>
    </reaction>
</comment>
<comment type="cofactor">
    <cofactor evidence="1">
        <name>pyridoxal 5'-phosphate</name>
        <dbReference type="ChEBI" id="CHEBI:597326"/>
    </cofactor>
</comment>
<comment type="pathway">
    <text evidence="1">Amino-acid biosynthesis; L-proline biosynthesis; L-glutamate 5-semialdehyde from L-ornithine: step 1/1.</text>
</comment>
<comment type="subcellular location">
    <subcellularLocation>
        <location evidence="1">Cytoplasm</location>
    </subcellularLocation>
</comment>
<comment type="similarity">
    <text evidence="1">Belongs to the class-III pyridoxal-phosphate-dependent aminotransferase family. OAT subfamily.</text>
</comment>